<protein>
    <recommendedName>
        <fullName>Synapse differentiation-inducing gene protein 1-like</fullName>
    </recommendedName>
    <alternativeName>
        <fullName>Capucin</fullName>
    </alternativeName>
    <alternativeName>
        <fullName>Caudate and putamen-enriched protein</fullName>
    </alternativeName>
    <alternativeName>
        <fullName>Dispanin subfamily C member 1</fullName>
        <shortName>DSPC1</shortName>
    </alternativeName>
    <alternativeName>
        <fullName>Synapse differentiation-induced protein 2</fullName>
    </alternativeName>
    <alternativeName>
        <fullName>Transmembrane protein 90A</fullName>
    </alternativeName>
</protein>
<name>SYN1L_MOUSE</name>
<evidence type="ECO:0000255" key="1"/>
<evidence type="ECO:0000256" key="2">
    <source>
        <dbReference type="SAM" id="MobiDB-lite"/>
    </source>
</evidence>
<evidence type="ECO:0000269" key="3">
    <source>
    </source>
</evidence>
<evidence type="ECO:0000305" key="4"/>
<organism>
    <name type="scientific">Mus musculus</name>
    <name type="common">Mouse</name>
    <dbReference type="NCBI Taxonomy" id="10090"/>
    <lineage>
        <taxon>Eukaryota</taxon>
        <taxon>Metazoa</taxon>
        <taxon>Chordata</taxon>
        <taxon>Craniata</taxon>
        <taxon>Vertebrata</taxon>
        <taxon>Euteleostomi</taxon>
        <taxon>Mammalia</taxon>
        <taxon>Eutheria</taxon>
        <taxon>Euarchontoglires</taxon>
        <taxon>Glires</taxon>
        <taxon>Rodentia</taxon>
        <taxon>Myomorpha</taxon>
        <taxon>Muroidea</taxon>
        <taxon>Muridae</taxon>
        <taxon>Murinae</taxon>
        <taxon>Mus</taxon>
        <taxon>Mus</taxon>
    </lineage>
</organism>
<feature type="chain" id="PRO_0000332726" description="Synapse differentiation-inducing gene protein 1-like">
    <location>
        <begin position="1"/>
        <end position="237"/>
    </location>
</feature>
<feature type="topological domain" description="Extracellular" evidence="1">
    <location>
        <begin position="1"/>
        <end position="161"/>
    </location>
</feature>
<feature type="transmembrane region" description="Helical" evidence="1">
    <location>
        <begin position="162"/>
        <end position="182"/>
    </location>
</feature>
<feature type="topological domain" description="Cytoplasmic" evidence="1">
    <location>
        <begin position="183"/>
        <end position="204"/>
    </location>
</feature>
<feature type="transmembrane region" description="Helical" evidence="1">
    <location>
        <begin position="205"/>
        <end position="225"/>
    </location>
</feature>
<feature type="topological domain" description="Extracellular" evidence="1">
    <location>
        <begin position="226"/>
        <end position="237"/>
    </location>
</feature>
<feature type="region of interest" description="Disordered" evidence="2">
    <location>
        <begin position="1"/>
        <end position="23"/>
    </location>
</feature>
<feature type="region of interest" description="Disordered" evidence="2">
    <location>
        <begin position="84"/>
        <end position="111"/>
    </location>
</feature>
<feature type="region of interest" description="Disordered" evidence="2">
    <location>
        <begin position="127"/>
        <end position="148"/>
    </location>
</feature>
<feature type="compositionally biased region" description="Acidic residues" evidence="2">
    <location>
        <begin position="129"/>
        <end position="148"/>
    </location>
</feature>
<reference key="1">
    <citation type="journal article" date="2006" name="Genomics">
        <title>Capucin: a novel striatal marker down-regulated in rodent models of Huntington disease.</title>
        <authorList>
            <person name="de Chaldee M."/>
            <person name="Brochier C."/>
            <person name="Van de Vel A."/>
            <person name="Caudy N."/>
            <person name="Luthi-Carter R."/>
            <person name="Gaillard M.-C."/>
            <person name="Elalouf J.-M."/>
        </authorList>
    </citation>
    <scope>NUCLEOTIDE SEQUENCE [MRNA]</scope>
    <scope>TISSUE SPECIFICITY</scope>
    <scope>SUBCELLULAR LOCATION</scope>
    <source>
        <strain>C57BL/6J</strain>
        <tissue>Corpus striatum</tissue>
    </source>
</reference>
<reference key="2">
    <citation type="journal article" date="2005" name="Science">
        <title>The transcriptional landscape of the mammalian genome.</title>
        <authorList>
            <person name="Carninci P."/>
            <person name="Kasukawa T."/>
            <person name="Katayama S."/>
            <person name="Gough J."/>
            <person name="Frith M.C."/>
            <person name="Maeda N."/>
            <person name="Oyama R."/>
            <person name="Ravasi T."/>
            <person name="Lenhard B."/>
            <person name="Wells C."/>
            <person name="Kodzius R."/>
            <person name="Shimokawa K."/>
            <person name="Bajic V.B."/>
            <person name="Brenner S.E."/>
            <person name="Batalov S."/>
            <person name="Forrest A.R."/>
            <person name="Zavolan M."/>
            <person name="Davis M.J."/>
            <person name="Wilming L.G."/>
            <person name="Aidinis V."/>
            <person name="Allen J.E."/>
            <person name="Ambesi-Impiombato A."/>
            <person name="Apweiler R."/>
            <person name="Aturaliya R.N."/>
            <person name="Bailey T.L."/>
            <person name="Bansal M."/>
            <person name="Baxter L."/>
            <person name="Beisel K.W."/>
            <person name="Bersano T."/>
            <person name="Bono H."/>
            <person name="Chalk A.M."/>
            <person name="Chiu K.P."/>
            <person name="Choudhary V."/>
            <person name="Christoffels A."/>
            <person name="Clutterbuck D.R."/>
            <person name="Crowe M.L."/>
            <person name="Dalla E."/>
            <person name="Dalrymple B.P."/>
            <person name="de Bono B."/>
            <person name="Della Gatta G."/>
            <person name="di Bernardo D."/>
            <person name="Down T."/>
            <person name="Engstrom P."/>
            <person name="Fagiolini M."/>
            <person name="Faulkner G."/>
            <person name="Fletcher C.F."/>
            <person name="Fukushima T."/>
            <person name="Furuno M."/>
            <person name="Futaki S."/>
            <person name="Gariboldi M."/>
            <person name="Georgii-Hemming P."/>
            <person name="Gingeras T.R."/>
            <person name="Gojobori T."/>
            <person name="Green R.E."/>
            <person name="Gustincich S."/>
            <person name="Harbers M."/>
            <person name="Hayashi Y."/>
            <person name="Hensch T.K."/>
            <person name="Hirokawa N."/>
            <person name="Hill D."/>
            <person name="Huminiecki L."/>
            <person name="Iacono M."/>
            <person name="Ikeo K."/>
            <person name="Iwama A."/>
            <person name="Ishikawa T."/>
            <person name="Jakt M."/>
            <person name="Kanapin A."/>
            <person name="Katoh M."/>
            <person name="Kawasawa Y."/>
            <person name="Kelso J."/>
            <person name="Kitamura H."/>
            <person name="Kitano H."/>
            <person name="Kollias G."/>
            <person name="Krishnan S.P."/>
            <person name="Kruger A."/>
            <person name="Kummerfeld S.K."/>
            <person name="Kurochkin I.V."/>
            <person name="Lareau L.F."/>
            <person name="Lazarevic D."/>
            <person name="Lipovich L."/>
            <person name="Liu J."/>
            <person name="Liuni S."/>
            <person name="McWilliam S."/>
            <person name="Madan Babu M."/>
            <person name="Madera M."/>
            <person name="Marchionni L."/>
            <person name="Matsuda H."/>
            <person name="Matsuzawa S."/>
            <person name="Miki H."/>
            <person name="Mignone F."/>
            <person name="Miyake S."/>
            <person name="Morris K."/>
            <person name="Mottagui-Tabar S."/>
            <person name="Mulder N."/>
            <person name="Nakano N."/>
            <person name="Nakauchi H."/>
            <person name="Ng P."/>
            <person name="Nilsson R."/>
            <person name="Nishiguchi S."/>
            <person name="Nishikawa S."/>
            <person name="Nori F."/>
            <person name="Ohara O."/>
            <person name="Okazaki Y."/>
            <person name="Orlando V."/>
            <person name="Pang K.C."/>
            <person name="Pavan W.J."/>
            <person name="Pavesi G."/>
            <person name="Pesole G."/>
            <person name="Petrovsky N."/>
            <person name="Piazza S."/>
            <person name="Reed J."/>
            <person name="Reid J.F."/>
            <person name="Ring B.Z."/>
            <person name="Ringwald M."/>
            <person name="Rost B."/>
            <person name="Ruan Y."/>
            <person name="Salzberg S.L."/>
            <person name="Sandelin A."/>
            <person name="Schneider C."/>
            <person name="Schoenbach C."/>
            <person name="Sekiguchi K."/>
            <person name="Semple C.A."/>
            <person name="Seno S."/>
            <person name="Sessa L."/>
            <person name="Sheng Y."/>
            <person name="Shibata Y."/>
            <person name="Shimada H."/>
            <person name="Shimada K."/>
            <person name="Silva D."/>
            <person name="Sinclair B."/>
            <person name="Sperling S."/>
            <person name="Stupka E."/>
            <person name="Sugiura K."/>
            <person name="Sultana R."/>
            <person name="Takenaka Y."/>
            <person name="Taki K."/>
            <person name="Tammoja K."/>
            <person name="Tan S.L."/>
            <person name="Tang S."/>
            <person name="Taylor M.S."/>
            <person name="Tegner J."/>
            <person name="Teichmann S.A."/>
            <person name="Ueda H.R."/>
            <person name="van Nimwegen E."/>
            <person name="Verardo R."/>
            <person name="Wei C.L."/>
            <person name="Yagi K."/>
            <person name="Yamanishi H."/>
            <person name="Zabarovsky E."/>
            <person name="Zhu S."/>
            <person name="Zimmer A."/>
            <person name="Hide W."/>
            <person name="Bult C."/>
            <person name="Grimmond S.M."/>
            <person name="Teasdale R.D."/>
            <person name="Liu E.T."/>
            <person name="Brusic V."/>
            <person name="Quackenbush J."/>
            <person name="Wahlestedt C."/>
            <person name="Mattick J.S."/>
            <person name="Hume D.A."/>
            <person name="Kai C."/>
            <person name="Sasaki D."/>
            <person name="Tomaru Y."/>
            <person name="Fukuda S."/>
            <person name="Kanamori-Katayama M."/>
            <person name="Suzuki M."/>
            <person name="Aoki J."/>
            <person name="Arakawa T."/>
            <person name="Iida J."/>
            <person name="Imamura K."/>
            <person name="Itoh M."/>
            <person name="Kato T."/>
            <person name="Kawaji H."/>
            <person name="Kawagashira N."/>
            <person name="Kawashima T."/>
            <person name="Kojima M."/>
            <person name="Kondo S."/>
            <person name="Konno H."/>
            <person name="Nakano K."/>
            <person name="Ninomiya N."/>
            <person name="Nishio T."/>
            <person name="Okada M."/>
            <person name="Plessy C."/>
            <person name="Shibata K."/>
            <person name="Shiraki T."/>
            <person name="Suzuki S."/>
            <person name="Tagami M."/>
            <person name="Waki K."/>
            <person name="Watahiki A."/>
            <person name="Okamura-Oho Y."/>
            <person name="Suzuki H."/>
            <person name="Kawai J."/>
            <person name="Hayashizaki Y."/>
        </authorList>
    </citation>
    <scope>NUCLEOTIDE SEQUENCE [LARGE SCALE MRNA]</scope>
    <source>
        <strain>C57BL/6J</strain>
        <tissue>Corpora quadrigemina</tissue>
    </source>
</reference>
<reference key="3">
    <citation type="journal article" date="2004" name="Genome Res.">
        <title>The status, quality, and expansion of the NIH full-length cDNA project: the Mammalian Gene Collection (MGC).</title>
        <authorList>
            <consortium name="The MGC Project Team"/>
        </authorList>
    </citation>
    <scope>NUCLEOTIDE SEQUENCE [LARGE SCALE MRNA]</scope>
    <source>
        <tissue>Brain</tissue>
    </source>
</reference>
<reference key="4">
    <citation type="journal article" date="2012" name="PLoS ONE">
        <title>The dispanins: a novel gene family of ancient origin that contains 14 human members.</title>
        <authorList>
            <person name="Sallman Almen M."/>
            <person name="Bringeland N."/>
            <person name="Fredriksson R."/>
            <person name="Schioth H.B."/>
        </authorList>
    </citation>
    <scope>GENE FAMILY</scope>
</reference>
<gene>
    <name type="primary">Syndig1l</name>
    <name type="synonym">Gm261</name>
    <name type="synonym">SynDIG2</name>
    <name type="synonym">Tmem90a</name>
</gene>
<sequence>MESLSELQNPLLPRSPTHLHRPYPYPEAPPGWSCQEQLYSFLLGGAGPARAHQLLDPGSLQLAVEAWYRPSCLLGRDKVKEPKAGSCETSFTEAREPLAGPAEEGSEPGQAAEDVTIHTVSYGVQEELQGQEDSQEEESDGTSSESECEDAFLTLPPRDHLGLTLFSMLCCFWPLGIAAFYFSQGTSKAISKGDFRLASTTSRRALFLATLSIAVGAGLYVAVVVALAAYMSQNGHG</sequence>
<accession>Q3USQ7</accession>
<keyword id="KW-0333">Golgi apparatus</keyword>
<keyword id="KW-0472">Membrane</keyword>
<keyword id="KW-1185">Reference proteome</keyword>
<keyword id="KW-0812">Transmembrane</keyword>
<keyword id="KW-1133">Transmembrane helix</keyword>
<comment type="subcellular location">
    <subcellularLocation>
        <location evidence="4">Membrane</location>
        <topology evidence="4">Multi-pass membrane protein</topology>
    </subcellularLocation>
    <subcellularLocation>
        <location evidence="3">Golgi apparatus</location>
        <location evidence="3">cis-Golgi network</location>
    </subcellularLocation>
</comment>
<comment type="tissue specificity">
    <text evidence="3">Expression is restricted to the caudate-putamen. Down-regulated in R6/2 transgenic mice, a model for Huntington disease.</text>
</comment>
<comment type="similarity">
    <text evidence="4">Belongs to the CD225/Dispanin family.</text>
</comment>
<dbReference type="EMBL" id="AY993933">
    <property type="protein sequence ID" value="AAY42815.1"/>
    <property type="molecule type" value="mRNA"/>
</dbReference>
<dbReference type="EMBL" id="AY993934">
    <property type="protein sequence ID" value="AAY42816.1"/>
    <property type="molecule type" value="mRNA"/>
</dbReference>
<dbReference type="EMBL" id="AK140195">
    <property type="protein sequence ID" value="BAE24274.1"/>
    <property type="molecule type" value="mRNA"/>
</dbReference>
<dbReference type="EMBL" id="BC132221">
    <property type="protein sequence ID" value="AAI32222.1"/>
    <property type="molecule type" value="mRNA"/>
</dbReference>
<dbReference type="CCDS" id="CCDS26049.1"/>
<dbReference type="RefSeq" id="NP_001028506.1">
    <property type="nucleotide sequence ID" value="NM_001033334.2"/>
</dbReference>
<dbReference type="RefSeq" id="XP_006516187.1">
    <property type="nucleotide sequence ID" value="XM_006516124.4"/>
</dbReference>
<dbReference type="RefSeq" id="XP_006516188.1">
    <property type="nucleotide sequence ID" value="XM_006516125.4"/>
</dbReference>
<dbReference type="RefSeq" id="XP_036013448.1">
    <property type="nucleotide sequence ID" value="XM_036157555.1"/>
</dbReference>
<dbReference type="SMR" id="Q3USQ7"/>
<dbReference type="FunCoup" id="Q3USQ7">
    <property type="interactions" value="196"/>
</dbReference>
<dbReference type="STRING" id="10090.ENSMUSP00000093206"/>
<dbReference type="PaxDb" id="10090-ENSMUSP00000093206"/>
<dbReference type="ProteomicsDB" id="263174"/>
<dbReference type="Antibodypedia" id="55451">
    <property type="antibodies" value="9 antibodies from 5 providers"/>
</dbReference>
<dbReference type="Ensembl" id="ENSMUST00000095550.4">
    <property type="protein sequence ID" value="ENSMUSP00000093206.3"/>
    <property type="gene ID" value="ENSMUSG00000071234.4"/>
</dbReference>
<dbReference type="Ensembl" id="ENSMUST00000222422.2">
    <property type="protein sequence ID" value="ENSMUSP00000152374.2"/>
    <property type="gene ID" value="ENSMUSG00000071234.4"/>
</dbReference>
<dbReference type="GeneID" id="627191"/>
<dbReference type="KEGG" id="mmu:627191"/>
<dbReference type="UCSC" id="uc007ofr.1">
    <property type="organism name" value="mouse"/>
</dbReference>
<dbReference type="AGR" id="MGI:2685107"/>
<dbReference type="CTD" id="646658"/>
<dbReference type="MGI" id="MGI:2685107">
    <property type="gene designation" value="Syndig1l"/>
</dbReference>
<dbReference type="VEuPathDB" id="HostDB:ENSMUSG00000071234"/>
<dbReference type="eggNOG" id="ENOG502QPQE">
    <property type="taxonomic scope" value="Eukaryota"/>
</dbReference>
<dbReference type="GeneTree" id="ENSGT00950000183147"/>
<dbReference type="HOGENOM" id="CLU_094250_0_0_1"/>
<dbReference type="InParanoid" id="Q3USQ7"/>
<dbReference type="OMA" id="KMKSQQF"/>
<dbReference type="OrthoDB" id="10018862at2759"/>
<dbReference type="PhylomeDB" id="Q3USQ7"/>
<dbReference type="TreeFam" id="TF331357"/>
<dbReference type="BioGRID-ORCS" id="627191">
    <property type="hits" value="3 hits in 75 CRISPR screens"/>
</dbReference>
<dbReference type="PRO" id="PR:Q3USQ7"/>
<dbReference type="Proteomes" id="UP000000589">
    <property type="component" value="Chromosome 12"/>
</dbReference>
<dbReference type="RNAct" id="Q3USQ7">
    <property type="molecule type" value="protein"/>
</dbReference>
<dbReference type="Bgee" id="ENSMUSG00000071234">
    <property type="expression patterns" value="Expressed in caudate-putamen and 86 other cell types or tissues"/>
</dbReference>
<dbReference type="ExpressionAtlas" id="Q3USQ7">
    <property type="expression patterns" value="baseline and differential"/>
</dbReference>
<dbReference type="GO" id="GO:0005794">
    <property type="term" value="C:Golgi apparatus"/>
    <property type="evidence" value="ECO:0000314"/>
    <property type="project" value="MGI"/>
</dbReference>
<dbReference type="GO" id="GO:0016020">
    <property type="term" value="C:membrane"/>
    <property type="evidence" value="ECO:0007669"/>
    <property type="project" value="UniProtKB-SubCell"/>
</dbReference>
<dbReference type="InterPro" id="IPR007593">
    <property type="entry name" value="CD225/Dispanin_fam"/>
</dbReference>
<dbReference type="PANTHER" id="PTHR14768:SF4">
    <property type="entry name" value="SYNAPSE DIFFERENTIATION-INDUCING GENE PROTEIN 1-LIKE"/>
    <property type="match status" value="1"/>
</dbReference>
<dbReference type="PANTHER" id="PTHR14768">
    <property type="entry name" value="UPF0338 PROTEIN"/>
    <property type="match status" value="1"/>
</dbReference>
<dbReference type="Pfam" id="PF04505">
    <property type="entry name" value="CD225"/>
    <property type="match status" value="1"/>
</dbReference>
<proteinExistence type="evidence at transcript level"/>